<proteinExistence type="evidence at transcript level"/>
<protein>
    <recommendedName>
        <fullName>Muscarinic acetylcholine receptor M4</fullName>
    </recommendedName>
</protein>
<name>ACM4_BOVIN</name>
<reference key="1">
    <citation type="submission" date="1994-01" db="EMBL/GenBank/DDBJ databases">
        <title>Presence of multiple muscarinic receptor subtypes in bovine chromaffin cells - analysis by polymerase chain reaction.</title>
        <authorList>
            <person name="Sui A.-L."/>
            <person name="Chou W.-Y."/>
            <person name="Kao L.-S."/>
        </authorList>
    </citation>
    <scope>NUCLEOTIDE SEQUENCE [MRNA]</scope>
    <source>
        <tissue>Adrenal gland</tissue>
    </source>
</reference>
<organism>
    <name type="scientific">Bos taurus</name>
    <name type="common">Bovine</name>
    <dbReference type="NCBI Taxonomy" id="9913"/>
    <lineage>
        <taxon>Eukaryota</taxon>
        <taxon>Metazoa</taxon>
        <taxon>Chordata</taxon>
        <taxon>Craniata</taxon>
        <taxon>Vertebrata</taxon>
        <taxon>Euteleostomi</taxon>
        <taxon>Mammalia</taxon>
        <taxon>Eutheria</taxon>
        <taxon>Laurasiatheria</taxon>
        <taxon>Artiodactyla</taxon>
        <taxon>Ruminantia</taxon>
        <taxon>Pecora</taxon>
        <taxon>Bovidae</taxon>
        <taxon>Bovinae</taxon>
        <taxon>Bos</taxon>
    </lineage>
</organism>
<dbReference type="EMBL" id="L27104">
    <property type="protein sequence ID" value="AAA30654.1"/>
    <property type="molecule type" value="mRNA"/>
</dbReference>
<dbReference type="STRING" id="9913.ENSBTAP00000045040"/>
<dbReference type="PaxDb" id="9913-ENSBTAP00000045040"/>
<dbReference type="eggNOG" id="KOG4220">
    <property type="taxonomic scope" value="Eukaryota"/>
</dbReference>
<dbReference type="InParanoid" id="P41986"/>
<dbReference type="OrthoDB" id="10071887at2759"/>
<dbReference type="Proteomes" id="UP000009136">
    <property type="component" value="Unplaced"/>
</dbReference>
<dbReference type="GO" id="GO:0045211">
    <property type="term" value="C:postsynaptic membrane"/>
    <property type="evidence" value="ECO:0007669"/>
    <property type="project" value="UniProtKB-SubCell"/>
</dbReference>
<dbReference type="GO" id="GO:0004930">
    <property type="term" value="F:G protein-coupled receptor activity"/>
    <property type="evidence" value="ECO:0007669"/>
    <property type="project" value="UniProtKB-KW"/>
</dbReference>
<sequence>MKQSVKKPPPPGDTTVRGELPNGKLEEAPPPVLPPPPRPMADKDTSNESSSGSATQNTKERPPTELSTTEATTPATPAPPLQPRTLNPASKWSKIQIVTKQTGNECVTAIEIVPATPAGMRPAANV</sequence>
<accession>P41986</accession>
<comment type="function">
    <text>The muscarinic acetylcholine receptor mediates various cellular responses, including inhibition of adenylate cyclase, breakdown of phosphoinositides and modulation of potassium channels through the action of G proteins. Primary transducing effect is inhibition of adenylate cyclase. May couple to multiple functional responses in cell lines.</text>
</comment>
<comment type="subcellular location">
    <subcellularLocation>
        <location>Cell membrane</location>
        <topology>Multi-pass membrane protein</topology>
    </subcellularLocation>
    <subcellularLocation>
        <location>Postsynaptic cell membrane</location>
        <topology>Multi-pass membrane protein</topology>
    </subcellularLocation>
</comment>
<comment type="similarity">
    <text evidence="3">Belongs to the G-protein coupled receptor 1 family. Muscarinic acetylcholine receptor subfamily. CHRM4 sub-subfamily.</text>
</comment>
<gene>
    <name type="primary">CHRM4</name>
</gene>
<feature type="chain" id="PRO_0000069036" description="Muscarinic acetylcholine receptor M4">
    <location>
        <begin position="1" status="less than"/>
        <end position="126" status="greater than"/>
    </location>
</feature>
<feature type="topological domain" description="Cytoplasmic" evidence="1">
    <location>
        <begin position="1" status="less than"/>
        <end position="126" status="greater than"/>
    </location>
</feature>
<feature type="region of interest" description="Disordered" evidence="2">
    <location>
        <begin position="1"/>
        <end position="90"/>
    </location>
</feature>
<feature type="compositionally biased region" description="Pro residues" evidence="2">
    <location>
        <begin position="28"/>
        <end position="39"/>
    </location>
</feature>
<feature type="compositionally biased region" description="Polar residues" evidence="2">
    <location>
        <begin position="47"/>
        <end position="57"/>
    </location>
</feature>
<feature type="compositionally biased region" description="Low complexity" evidence="2">
    <location>
        <begin position="64"/>
        <end position="75"/>
    </location>
</feature>
<feature type="non-terminal residue">
    <location>
        <position position="1"/>
    </location>
</feature>
<feature type="non-terminal residue">
    <location>
        <position position="126"/>
    </location>
</feature>
<evidence type="ECO:0000250" key="1"/>
<evidence type="ECO:0000256" key="2">
    <source>
        <dbReference type="SAM" id="MobiDB-lite"/>
    </source>
</evidence>
<evidence type="ECO:0000305" key="3"/>
<keyword id="KW-1003">Cell membrane</keyword>
<keyword id="KW-0297">G-protein coupled receptor</keyword>
<keyword id="KW-0472">Membrane</keyword>
<keyword id="KW-0628">Postsynaptic cell membrane</keyword>
<keyword id="KW-0675">Receptor</keyword>
<keyword id="KW-1185">Reference proteome</keyword>
<keyword id="KW-0770">Synapse</keyword>
<keyword id="KW-0807">Transducer</keyword>
<keyword id="KW-0812">Transmembrane</keyword>